<gene>
    <name evidence="1" type="primary">hcp</name>
    <name type="ordered locus">SSON_0859</name>
</gene>
<proteinExistence type="inferred from homology"/>
<keyword id="KW-0001">2Fe-2S</keyword>
<keyword id="KW-0963">Cytoplasm</keyword>
<keyword id="KW-0408">Iron</keyword>
<keyword id="KW-0411">Iron-sulfur</keyword>
<keyword id="KW-0479">Metal-binding</keyword>
<keyword id="KW-0560">Oxidoreductase</keyword>
<keyword id="KW-1185">Reference proteome</keyword>
<sequence length="552" mass="60255">MIMFCVQCEQTIRTPAGNGCSYAQGMCGKTAETSDLQDLLIAALQGLSAWAVKACEYGIINHDVDSFAPRAFFSTLTNVNFDSPRIVGYAREAIALREALKAQCLAVDANARVDNPMADLQLVSDDLGELQRQAAEFTPNKDKAAIGENILGLRLLCLYGLKGAAAYMEHAHVLGQYDNDIYAQYHKIMAWLGTWPADMNALLECSMEIGQMNFKVMSILDAGETGKYGHPTPTQVNVKATAGKCILISGHDLKDLYNLLEQTEGTGVNVYTHGEMLPAHGYPELRKFKHLVGNYGSGWQNQQVEFARFPGPIVMTSNCIIDPTVGAYDDRIWTRSIVGWPGVRHLDGDDFSAVITQAQQMAGFPYSEIPHLITVGFGRQTLLGAADTLIDLVSREKLRHIFLLGGCDGARGERHYFTDFATSVPDDCLILTLACGKYRFNKLEFGDIEGLPRLVDAGQCNDAYSAIILAVTLAEKLGCGVNDLPLSLVLSWFEQKAIVILLTLLSLGVKNIVTGPTAPGFLTPDLLAVLNEKFGLRSITTVEEDMKQLLSA</sequence>
<dbReference type="EC" id="1.7.99.1" evidence="1"/>
<dbReference type="EMBL" id="CP000038">
    <property type="protein sequence ID" value="AAZ87602.1"/>
    <property type="molecule type" value="Genomic_DNA"/>
</dbReference>
<dbReference type="SMR" id="Q3Z3R0"/>
<dbReference type="KEGG" id="ssn:SSON_0859"/>
<dbReference type="HOGENOM" id="CLU_038344_2_0_6"/>
<dbReference type="Proteomes" id="UP000002529">
    <property type="component" value="Chromosome"/>
</dbReference>
<dbReference type="GO" id="GO:0005737">
    <property type="term" value="C:cytoplasm"/>
    <property type="evidence" value="ECO:0007669"/>
    <property type="project" value="UniProtKB-SubCell"/>
</dbReference>
<dbReference type="GO" id="GO:0051537">
    <property type="term" value="F:2 iron, 2 sulfur cluster binding"/>
    <property type="evidence" value="ECO:0007669"/>
    <property type="project" value="UniProtKB-KW"/>
</dbReference>
<dbReference type="GO" id="GO:0050418">
    <property type="term" value="F:hydroxylamine reductase activity"/>
    <property type="evidence" value="ECO:0007669"/>
    <property type="project" value="UniProtKB-UniRule"/>
</dbReference>
<dbReference type="GO" id="GO:0046872">
    <property type="term" value="F:metal ion binding"/>
    <property type="evidence" value="ECO:0007669"/>
    <property type="project" value="UniProtKB-KW"/>
</dbReference>
<dbReference type="GO" id="GO:0004601">
    <property type="term" value="F:peroxidase activity"/>
    <property type="evidence" value="ECO:0007669"/>
    <property type="project" value="TreeGrafter"/>
</dbReference>
<dbReference type="GO" id="GO:0042542">
    <property type="term" value="P:response to hydrogen peroxide"/>
    <property type="evidence" value="ECO:0007669"/>
    <property type="project" value="TreeGrafter"/>
</dbReference>
<dbReference type="CDD" id="cd01914">
    <property type="entry name" value="HCP"/>
    <property type="match status" value="1"/>
</dbReference>
<dbReference type="FunFam" id="1.20.1270.20:FF:000001">
    <property type="entry name" value="Hydroxylamine reductase"/>
    <property type="match status" value="1"/>
</dbReference>
<dbReference type="FunFam" id="1.20.1270.20:FF:000002">
    <property type="entry name" value="Hydroxylamine reductase"/>
    <property type="match status" value="1"/>
</dbReference>
<dbReference type="FunFam" id="3.40.50.2030:FF:000001">
    <property type="entry name" value="Hydroxylamine reductase"/>
    <property type="match status" value="1"/>
</dbReference>
<dbReference type="FunFam" id="3.40.50.2030:FF:000002">
    <property type="entry name" value="Hydroxylamine reductase"/>
    <property type="match status" value="1"/>
</dbReference>
<dbReference type="Gene3D" id="1.20.1270.20">
    <property type="match status" value="2"/>
</dbReference>
<dbReference type="Gene3D" id="3.40.50.2030">
    <property type="match status" value="2"/>
</dbReference>
<dbReference type="HAMAP" id="MF_00069">
    <property type="entry name" value="Hydroxylam_reduct"/>
    <property type="match status" value="1"/>
</dbReference>
<dbReference type="InterPro" id="IPR004137">
    <property type="entry name" value="HCP/CODH"/>
</dbReference>
<dbReference type="InterPro" id="IPR010048">
    <property type="entry name" value="Hydroxylam_reduct"/>
</dbReference>
<dbReference type="InterPro" id="IPR016099">
    <property type="entry name" value="Prismane-like_a/b-sand"/>
</dbReference>
<dbReference type="InterPro" id="IPR011254">
    <property type="entry name" value="Prismane-like_sf"/>
</dbReference>
<dbReference type="InterPro" id="IPR016100">
    <property type="entry name" value="Prismane_a-bundle"/>
</dbReference>
<dbReference type="NCBIfam" id="TIGR01703">
    <property type="entry name" value="hybrid_clust"/>
    <property type="match status" value="1"/>
</dbReference>
<dbReference type="NCBIfam" id="NF003658">
    <property type="entry name" value="PRK05290.1"/>
    <property type="match status" value="1"/>
</dbReference>
<dbReference type="PANTHER" id="PTHR30109">
    <property type="entry name" value="HYDROXYLAMINE REDUCTASE"/>
    <property type="match status" value="1"/>
</dbReference>
<dbReference type="PANTHER" id="PTHR30109:SF0">
    <property type="entry name" value="HYDROXYLAMINE REDUCTASE"/>
    <property type="match status" value="1"/>
</dbReference>
<dbReference type="Pfam" id="PF03063">
    <property type="entry name" value="Prismane"/>
    <property type="match status" value="1"/>
</dbReference>
<dbReference type="PIRSF" id="PIRSF000076">
    <property type="entry name" value="HCP"/>
    <property type="match status" value="1"/>
</dbReference>
<dbReference type="SUPFAM" id="SSF56821">
    <property type="entry name" value="Prismane protein-like"/>
    <property type="match status" value="1"/>
</dbReference>
<protein>
    <recommendedName>
        <fullName evidence="1">Hydroxylamine reductase</fullName>
        <ecNumber evidence="1">1.7.99.1</ecNumber>
    </recommendedName>
    <alternativeName>
        <fullName evidence="1">Hybrid-cluster protein</fullName>
        <shortName evidence="1">HCP</shortName>
    </alternativeName>
    <alternativeName>
        <fullName evidence="1">Prismane protein</fullName>
    </alternativeName>
</protein>
<comment type="function">
    <text evidence="1">Catalyzes the reduction of hydroxylamine to form NH(3) and H(2)O.</text>
</comment>
<comment type="catalytic activity">
    <reaction evidence="1">
        <text>A + NH4(+) + H2O = hydroxylamine + AH2 + H(+)</text>
        <dbReference type="Rhea" id="RHEA:22052"/>
        <dbReference type="ChEBI" id="CHEBI:13193"/>
        <dbReference type="ChEBI" id="CHEBI:15377"/>
        <dbReference type="ChEBI" id="CHEBI:15378"/>
        <dbReference type="ChEBI" id="CHEBI:15429"/>
        <dbReference type="ChEBI" id="CHEBI:17499"/>
        <dbReference type="ChEBI" id="CHEBI:28938"/>
        <dbReference type="EC" id="1.7.99.1"/>
    </reaction>
</comment>
<comment type="cofactor">
    <cofactor evidence="1">
        <name>[2Fe-2S] cluster</name>
        <dbReference type="ChEBI" id="CHEBI:190135"/>
    </cofactor>
    <text evidence="1">Binds 1 [2Fe-2S] cluster.</text>
</comment>
<comment type="cofactor">
    <cofactor evidence="1">
        <name>hybrid [4Fe-2O-2S] cluster</name>
        <dbReference type="ChEBI" id="CHEBI:60519"/>
    </cofactor>
    <text evidence="1">Binds 1 hybrid [4Fe-2O-2S] cluster.</text>
</comment>
<comment type="subcellular location">
    <subcellularLocation>
        <location evidence="1">Cytoplasm</location>
    </subcellularLocation>
</comment>
<comment type="similarity">
    <text evidence="1">Belongs to the HCP family.</text>
</comment>
<organism>
    <name type="scientific">Shigella sonnei (strain Ss046)</name>
    <dbReference type="NCBI Taxonomy" id="300269"/>
    <lineage>
        <taxon>Bacteria</taxon>
        <taxon>Pseudomonadati</taxon>
        <taxon>Pseudomonadota</taxon>
        <taxon>Gammaproteobacteria</taxon>
        <taxon>Enterobacterales</taxon>
        <taxon>Enterobacteriaceae</taxon>
        <taxon>Shigella</taxon>
    </lineage>
</organism>
<reference key="1">
    <citation type="journal article" date="2005" name="Nucleic Acids Res.">
        <title>Genome dynamics and diversity of Shigella species, the etiologic agents of bacillary dysentery.</title>
        <authorList>
            <person name="Yang F."/>
            <person name="Yang J."/>
            <person name="Zhang X."/>
            <person name="Chen L."/>
            <person name="Jiang Y."/>
            <person name="Yan Y."/>
            <person name="Tang X."/>
            <person name="Wang J."/>
            <person name="Xiong Z."/>
            <person name="Dong J."/>
            <person name="Xue Y."/>
            <person name="Zhu Y."/>
            <person name="Xu X."/>
            <person name="Sun L."/>
            <person name="Chen S."/>
            <person name="Nie H."/>
            <person name="Peng J."/>
            <person name="Xu J."/>
            <person name="Wang Y."/>
            <person name="Yuan Z."/>
            <person name="Wen Y."/>
            <person name="Yao Z."/>
            <person name="Shen Y."/>
            <person name="Qiang B."/>
            <person name="Hou Y."/>
            <person name="Yu J."/>
            <person name="Jin Q."/>
        </authorList>
    </citation>
    <scope>NUCLEOTIDE SEQUENCE [LARGE SCALE GENOMIC DNA]</scope>
    <source>
        <strain>Ss046</strain>
    </source>
</reference>
<feature type="chain" id="PRO_1000009175" description="Hydroxylamine reductase">
    <location>
        <begin position="1"/>
        <end position="552"/>
    </location>
</feature>
<feature type="binding site" evidence="1">
    <location>
        <position position="5"/>
    </location>
    <ligand>
        <name>[2Fe-2S] cluster</name>
        <dbReference type="ChEBI" id="CHEBI:190135"/>
    </ligand>
</feature>
<feature type="binding site" evidence="1">
    <location>
        <position position="8"/>
    </location>
    <ligand>
        <name>[2Fe-2S] cluster</name>
        <dbReference type="ChEBI" id="CHEBI:190135"/>
    </ligand>
</feature>
<feature type="binding site" evidence="1">
    <location>
        <position position="20"/>
    </location>
    <ligand>
        <name>[2Fe-2S] cluster</name>
        <dbReference type="ChEBI" id="CHEBI:190135"/>
    </ligand>
</feature>
<feature type="binding site" evidence="1">
    <location>
        <position position="27"/>
    </location>
    <ligand>
        <name>[2Fe-2S] cluster</name>
        <dbReference type="ChEBI" id="CHEBI:190135"/>
    </ligand>
</feature>
<feature type="binding site" evidence="1">
    <location>
        <position position="251"/>
    </location>
    <ligand>
        <name>hybrid [4Fe-2O-2S] cluster</name>
        <dbReference type="ChEBI" id="CHEBI:60519"/>
    </ligand>
</feature>
<feature type="binding site" evidence="1">
    <location>
        <position position="275"/>
    </location>
    <ligand>
        <name>hybrid [4Fe-2O-2S] cluster</name>
        <dbReference type="ChEBI" id="CHEBI:60519"/>
    </ligand>
</feature>
<feature type="binding site" evidence="1">
    <location>
        <position position="319"/>
    </location>
    <ligand>
        <name>hybrid [4Fe-2O-2S] cluster</name>
        <dbReference type="ChEBI" id="CHEBI:60519"/>
    </ligand>
</feature>
<feature type="binding site" description="via persulfide group" evidence="1">
    <location>
        <position position="407"/>
    </location>
    <ligand>
        <name>hybrid [4Fe-2O-2S] cluster</name>
        <dbReference type="ChEBI" id="CHEBI:60519"/>
    </ligand>
</feature>
<feature type="binding site" evidence="1">
    <location>
        <position position="435"/>
    </location>
    <ligand>
        <name>hybrid [4Fe-2O-2S] cluster</name>
        <dbReference type="ChEBI" id="CHEBI:60519"/>
    </ligand>
</feature>
<feature type="binding site" evidence="1">
    <location>
        <position position="460"/>
    </location>
    <ligand>
        <name>hybrid [4Fe-2O-2S] cluster</name>
        <dbReference type="ChEBI" id="CHEBI:60519"/>
    </ligand>
</feature>
<feature type="binding site" evidence="1">
    <location>
        <position position="494"/>
    </location>
    <ligand>
        <name>hybrid [4Fe-2O-2S] cluster</name>
        <dbReference type="ChEBI" id="CHEBI:60519"/>
    </ligand>
</feature>
<feature type="binding site" evidence="1">
    <location>
        <position position="496"/>
    </location>
    <ligand>
        <name>hybrid [4Fe-2O-2S] cluster</name>
        <dbReference type="ChEBI" id="CHEBI:60519"/>
    </ligand>
</feature>
<feature type="modified residue" description="Cysteine persulfide" evidence="1">
    <location>
        <position position="407"/>
    </location>
</feature>
<evidence type="ECO:0000255" key="1">
    <source>
        <dbReference type="HAMAP-Rule" id="MF_00069"/>
    </source>
</evidence>
<name>HCP_SHISS</name>
<accession>Q3Z3R0</accession>